<accession>Q5BLX8</accession>
<evidence type="ECO:0000250" key="1"/>
<evidence type="ECO:0000250" key="2">
    <source>
        <dbReference type="UniProtKB" id="Q9BRX9"/>
    </source>
</evidence>
<evidence type="ECO:0000250" key="3">
    <source>
        <dbReference type="UniProtKB" id="Q9DAJ4"/>
    </source>
</evidence>
<evidence type="ECO:0000269" key="4">
    <source>
    </source>
</evidence>
<evidence type="ECO:0000305" key="5"/>
<organism>
    <name type="scientific">Rattus norvegicus</name>
    <name type="common">Rat</name>
    <dbReference type="NCBI Taxonomy" id="10116"/>
    <lineage>
        <taxon>Eukaryota</taxon>
        <taxon>Metazoa</taxon>
        <taxon>Chordata</taxon>
        <taxon>Craniata</taxon>
        <taxon>Vertebrata</taxon>
        <taxon>Euteleostomi</taxon>
        <taxon>Mammalia</taxon>
        <taxon>Eutheria</taxon>
        <taxon>Euarchontoglires</taxon>
        <taxon>Glires</taxon>
        <taxon>Rodentia</taxon>
        <taxon>Myomorpha</taxon>
        <taxon>Muroidea</taxon>
        <taxon>Muridae</taxon>
        <taxon>Murinae</taxon>
        <taxon>Rattus</taxon>
    </lineage>
</organism>
<sequence length="315" mass="34382">MAFPEPKPRAPELPRKQLKTLDCGQGAVRAVRFNVDGNYCLTCGSDKTLKLWNPLRGTLLRTYSGHGYEVLDAAGSFDNSHLCSGGGDKTVVLWDVATGQVVRKFRGHAGKVNTVQFNEEATVILSGSIDSSVRCWDCRSRKPEPVQTLDEARDGISSVKVSDHEILAGSVDGRVRRYDLRMGQVTSDYVGSPITCTCFSRDGQCTLISSLDSTLRLLDKDTGELLGEYVGHKNQKYKLDCCLSERDTHVVSCSEDGKVFFWDLVEGSLALALPVGSNVVQSLAYHPADPCLLTAMGGSIQYWREETYEAEGGAG</sequence>
<comment type="function">
    <text evidence="2 3 4">Molecular scaffold protein for various multimeric protein complexes. Acts as a module in the assembly of a multicomponent scaffold for the ERK pathway, linking ERK responses to specific agonists. At low concentrations it enhances ERK activation, whereas high concentrations lead to the inhibition of ERK activation. Also involved in response to hypoxia by acting as a negative regulator of HIF1A/HIF-1-alpha via its interaction with EGLN3/PHD3. May promote degradation of HIF1A. May act by recruiting signaling complexes to a specific upstream activator (By similarity). May also be involved in pre-mRNA splicing. Participates in tight junction development by regulating apico-basal polarity, a key step in tissue development and organization. Mechanistically, regulates the translocation of PAR6-aPKC from the cytoplasm to the apical surface by acting as an adapter between PARD6B AND CRB3. Also acts as a negative regulator of mTORC1 under nutrient-rich conditions by binding to the active Rag GTPases to inhibit mTORC1 localization to the lysosome and phosphorylation of downstream targets. This facilitates constitutive basal autophagy during nutrient availability (By similarity).</text>
</comment>
<comment type="subunit">
    <text evidence="2 3 4">Interacts with EGLN3/PHD3 (PubMed:16407229). Interacts with ERK signaling proteins MAP2K1/MEK1, MAP2K2/MEK2, LAMTOR3, ARAF/Raf-1, MAPK1/ERK2 and MAPK3/ERK1 (By similarity). Identified in the spliceosome C complex. Interacts with PARD6B and CRB3. Interacts strongly with GTP-bound RRAGA but not with inactive GDP-bound. Interacts with p62/SQSTM1 (By similarity).</text>
</comment>
<comment type="subcellular location">
    <subcellularLocation>
        <location evidence="4">Cytoplasm</location>
    </subcellularLocation>
    <subcellularLocation>
        <location evidence="2">Lysosome</location>
    </subcellularLocation>
    <subcellularLocation>
        <location evidence="4">Nucleus</location>
    </subcellularLocation>
    <text evidence="1">Predominantly cytoplasmic. Partially nuclear.</text>
</comment>
<comment type="tissue specificity">
    <text evidence="4">Highly expressed in testis and brain. Expressed at intermediate level in heart, liver and kidney. Weakly expressed in spleen and lung and absent in muscle.</text>
</comment>
<comment type="similarity">
    <text evidence="5">Belongs to the WD repeat MORG1 family.</text>
</comment>
<proteinExistence type="evidence at protein level"/>
<feature type="chain" id="PRO_0000235265" description="WD repeat domain-containing protein 83">
    <location>
        <begin position="1"/>
        <end position="315"/>
    </location>
</feature>
<feature type="repeat" description="WD 1">
    <location>
        <begin position="23"/>
        <end position="62"/>
    </location>
</feature>
<feature type="repeat" description="WD 2">
    <location>
        <begin position="65"/>
        <end position="104"/>
    </location>
</feature>
<feature type="repeat" description="WD 3">
    <location>
        <begin position="107"/>
        <end position="146"/>
    </location>
</feature>
<feature type="repeat" description="WD 4">
    <location>
        <begin position="151"/>
        <end position="188"/>
    </location>
</feature>
<feature type="repeat" description="WD 5">
    <location>
        <begin position="190"/>
        <end position="228"/>
    </location>
</feature>
<feature type="repeat" description="WD 6">
    <location>
        <begin position="231"/>
        <end position="272"/>
    </location>
</feature>
<feature type="repeat" description="WD 7">
    <location>
        <begin position="275"/>
        <end position="313"/>
    </location>
</feature>
<gene>
    <name type="primary">Wdr83</name>
    <name type="synonym">Morg1</name>
</gene>
<reference key="1">
    <citation type="journal article" date="2006" name="J. Biol. Chem.">
        <title>The novel WD-repeat protein Morg1 acts as a molecular scaffold for hypoxia-inducible factor prolyl hydroxylase 3 (PHD3).</title>
        <authorList>
            <person name="Hopfer U."/>
            <person name="Hopfer H."/>
            <person name="Jablonski K."/>
            <person name="Stahl R.A.K."/>
            <person name="Wolf G."/>
        </authorList>
    </citation>
    <scope>NUCLEOTIDE SEQUENCE [MRNA]</scope>
    <scope>FUNCTION</scope>
    <scope>SUBCELLULAR LOCATION</scope>
    <scope>TISSUE SPECIFICITY</scope>
    <scope>INTERACTION WITH EGLN3</scope>
    <source>
        <strain>Sprague-Dawley</strain>
        <tissue>Brain</tissue>
    </source>
</reference>
<dbReference type="EMBL" id="AY940050">
    <property type="protein sequence ID" value="AAX23986.1"/>
    <property type="molecule type" value="mRNA"/>
</dbReference>
<dbReference type="RefSeq" id="NP_001041312.1">
    <property type="nucleotide sequence ID" value="NM_001047847.1"/>
</dbReference>
<dbReference type="SMR" id="Q5BLX8"/>
<dbReference type="BioGRID" id="252752">
    <property type="interactions" value="1"/>
</dbReference>
<dbReference type="FunCoup" id="Q5BLX8">
    <property type="interactions" value="1120"/>
</dbReference>
<dbReference type="STRING" id="10116.ENSRNOP00000005917"/>
<dbReference type="PhosphoSitePlus" id="Q5BLX8"/>
<dbReference type="PaxDb" id="10116-ENSRNOP00000005917"/>
<dbReference type="GeneID" id="288924"/>
<dbReference type="KEGG" id="rno:288924"/>
<dbReference type="AGR" id="RGD:1306947"/>
<dbReference type="CTD" id="84292"/>
<dbReference type="RGD" id="1306947">
    <property type="gene designation" value="Wdr83"/>
</dbReference>
<dbReference type="eggNOG" id="KOG0316">
    <property type="taxonomic scope" value="Eukaryota"/>
</dbReference>
<dbReference type="InParanoid" id="Q5BLX8"/>
<dbReference type="OrthoDB" id="71437at2759"/>
<dbReference type="PhylomeDB" id="Q5BLX8"/>
<dbReference type="Reactome" id="R-RNO-5674135">
    <property type="pathway name" value="MAP2K and MAPK activation"/>
</dbReference>
<dbReference type="PRO" id="PR:Q5BLX8"/>
<dbReference type="Proteomes" id="UP000002494">
    <property type="component" value="Unplaced"/>
</dbReference>
<dbReference type="GO" id="GO:0071013">
    <property type="term" value="C:catalytic step 2 spliceosome"/>
    <property type="evidence" value="ECO:0000266"/>
    <property type="project" value="RGD"/>
</dbReference>
<dbReference type="GO" id="GO:0005737">
    <property type="term" value="C:cytoplasm"/>
    <property type="evidence" value="ECO:0000314"/>
    <property type="project" value="UniProtKB"/>
</dbReference>
<dbReference type="GO" id="GO:0005764">
    <property type="term" value="C:lysosome"/>
    <property type="evidence" value="ECO:0007669"/>
    <property type="project" value="UniProtKB-SubCell"/>
</dbReference>
<dbReference type="GO" id="GO:0005634">
    <property type="term" value="C:nucleus"/>
    <property type="evidence" value="ECO:0000266"/>
    <property type="project" value="RGD"/>
</dbReference>
<dbReference type="GO" id="GO:0005681">
    <property type="term" value="C:spliceosomal complex"/>
    <property type="evidence" value="ECO:0000266"/>
    <property type="project" value="RGD"/>
</dbReference>
<dbReference type="GO" id="GO:0090594">
    <property type="term" value="P:inflammatory response to wounding"/>
    <property type="evidence" value="ECO:0000266"/>
    <property type="project" value="RGD"/>
</dbReference>
<dbReference type="GO" id="GO:0000398">
    <property type="term" value="P:mRNA splicing, via spliceosome"/>
    <property type="evidence" value="ECO:0000266"/>
    <property type="project" value="RGD"/>
</dbReference>
<dbReference type="GO" id="GO:0001843">
    <property type="term" value="P:neural tube closure"/>
    <property type="evidence" value="ECO:0000266"/>
    <property type="project" value="RGD"/>
</dbReference>
<dbReference type="GO" id="GO:0060674">
    <property type="term" value="P:placenta blood vessel development"/>
    <property type="evidence" value="ECO:0000266"/>
    <property type="project" value="RGD"/>
</dbReference>
<dbReference type="GO" id="GO:0043122">
    <property type="term" value="P:regulation of canonical NF-kappaB signal transduction"/>
    <property type="evidence" value="ECO:0000266"/>
    <property type="project" value="RGD"/>
</dbReference>
<dbReference type="GO" id="GO:0001666">
    <property type="term" value="P:response to hypoxia"/>
    <property type="evidence" value="ECO:0000266"/>
    <property type="project" value="RGD"/>
</dbReference>
<dbReference type="GO" id="GO:0032496">
    <property type="term" value="P:response to lipopolysaccharide"/>
    <property type="evidence" value="ECO:0000266"/>
    <property type="project" value="RGD"/>
</dbReference>
<dbReference type="GO" id="GO:0009611">
    <property type="term" value="P:response to wounding"/>
    <property type="evidence" value="ECO:0000266"/>
    <property type="project" value="RGD"/>
</dbReference>
<dbReference type="GO" id="GO:0000375">
    <property type="term" value="P:RNA splicing, via transesterification reactions"/>
    <property type="evidence" value="ECO:0000266"/>
    <property type="project" value="RGD"/>
</dbReference>
<dbReference type="CDD" id="cd00200">
    <property type="entry name" value="WD40"/>
    <property type="match status" value="1"/>
</dbReference>
<dbReference type="FunFam" id="2.130.10.10:FF:000273">
    <property type="entry name" value="WD repeat domain-containing protein 83"/>
    <property type="match status" value="1"/>
</dbReference>
<dbReference type="Gene3D" id="2.130.10.10">
    <property type="entry name" value="YVTN repeat-like/Quinoprotein amine dehydrogenase"/>
    <property type="match status" value="1"/>
</dbReference>
<dbReference type="InterPro" id="IPR020472">
    <property type="entry name" value="G-protein_beta_WD-40_rep"/>
</dbReference>
<dbReference type="InterPro" id="IPR015943">
    <property type="entry name" value="WD40/YVTN_repeat-like_dom_sf"/>
</dbReference>
<dbReference type="InterPro" id="IPR019775">
    <property type="entry name" value="WD40_repeat_CS"/>
</dbReference>
<dbReference type="InterPro" id="IPR036322">
    <property type="entry name" value="WD40_repeat_dom_sf"/>
</dbReference>
<dbReference type="InterPro" id="IPR001680">
    <property type="entry name" value="WD40_rpt"/>
</dbReference>
<dbReference type="InterPro" id="IPR051980">
    <property type="entry name" value="WD_repeat_MORG1"/>
</dbReference>
<dbReference type="PANTHER" id="PTHR22842:SF3">
    <property type="entry name" value="WD REPEAT DOMAIN-CONTAINING PROTEIN 83"/>
    <property type="match status" value="1"/>
</dbReference>
<dbReference type="PANTHER" id="PTHR22842">
    <property type="entry name" value="WD40 REPEAT PROTEIN"/>
    <property type="match status" value="1"/>
</dbReference>
<dbReference type="Pfam" id="PF00400">
    <property type="entry name" value="WD40"/>
    <property type="match status" value="5"/>
</dbReference>
<dbReference type="PRINTS" id="PR00320">
    <property type="entry name" value="GPROTEINBRPT"/>
</dbReference>
<dbReference type="SMART" id="SM00320">
    <property type="entry name" value="WD40"/>
    <property type="match status" value="7"/>
</dbReference>
<dbReference type="SUPFAM" id="SSF50978">
    <property type="entry name" value="WD40 repeat-like"/>
    <property type="match status" value="1"/>
</dbReference>
<dbReference type="PROSITE" id="PS00678">
    <property type="entry name" value="WD_REPEATS_1"/>
    <property type="match status" value="2"/>
</dbReference>
<dbReference type="PROSITE" id="PS50082">
    <property type="entry name" value="WD_REPEATS_2"/>
    <property type="match status" value="3"/>
</dbReference>
<dbReference type="PROSITE" id="PS50294">
    <property type="entry name" value="WD_REPEATS_REGION"/>
    <property type="match status" value="1"/>
</dbReference>
<protein>
    <recommendedName>
        <fullName>WD repeat domain-containing protein 83</fullName>
    </recommendedName>
    <alternativeName>
        <fullName>Mitogen-activated protein kinase organizer 1</fullName>
        <shortName>MAPK organizer 1</shortName>
    </alternativeName>
</protein>
<name>WDR83_RAT</name>
<keyword id="KW-0963">Cytoplasm</keyword>
<keyword id="KW-0458">Lysosome</keyword>
<keyword id="KW-0507">mRNA processing</keyword>
<keyword id="KW-0508">mRNA splicing</keyword>
<keyword id="KW-0539">Nucleus</keyword>
<keyword id="KW-1185">Reference proteome</keyword>
<keyword id="KW-0677">Repeat</keyword>
<keyword id="KW-0747">Spliceosome</keyword>
<keyword id="KW-0853">WD repeat</keyword>